<protein>
    <recommendedName>
        <fullName>Probable pectin lyase F-1</fullName>
        <shortName>PLF-1</shortName>
        <ecNumber>4.2.2.10</ecNumber>
    </recommendedName>
</protein>
<gene>
    <name type="primary">pelF-1</name>
    <name type="ORF">ATEG_07577</name>
</gene>
<sequence>MKTATFSTLLALSASAVNAQVSGTAFGFAAGTTGGGSAAPETPSSIDELVEWLTDDTARTIMIDRTWDFTGTEGTTDGQCCSTRTTTCEGGTSAGQAWIQDTCDDGTWVSCTYDNAAKNPINVGSNKSIVGVGSDGVLKGKGLRITGGNSNVIIQNIHITDLNPQYVWGGDAITLDDADLVWIDHNKISLIGRQFIVSGWGKAGRVTISNNEFDGVTDWSAGCNGKHYWTLLLIGEQDFYTFSDNWVHDVSGRAPHMGTDMTESTIFFHGVNNYFQNIGGHAFDIDTNTWALLEGNYFESVDTPLTETSLTSGALIYNVPTVDSASACTSPLGYICEWNRLAGSGTWTERTDADVLTMASQYIDSLIDHIPVADVPTTVVANAGVGKL</sequence>
<proteinExistence type="inferred from homology"/>
<reference key="1">
    <citation type="submission" date="2005-09" db="EMBL/GenBank/DDBJ databases">
        <title>Annotation of the Aspergillus terreus NIH2624 genome.</title>
        <authorList>
            <person name="Birren B.W."/>
            <person name="Lander E.S."/>
            <person name="Galagan J.E."/>
            <person name="Nusbaum C."/>
            <person name="Devon K."/>
            <person name="Henn M."/>
            <person name="Ma L.-J."/>
            <person name="Jaffe D.B."/>
            <person name="Butler J."/>
            <person name="Alvarez P."/>
            <person name="Gnerre S."/>
            <person name="Grabherr M."/>
            <person name="Kleber M."/>
            <person name="Mauceli E.W."/>
            <person name="Brockman W."/>
            <person name="Rounsley S."/>
            <person name="Young S.K."/>
            <person name="LaButti K."/>
            <person name="Pushparaj V."/>
            <person name="DeCaprio D."/>
            <person name="Crawford M."/>
            <person name="Koehrsen M."/>
            <person name="Engels R."/>
            <person name="Montgomery P."/>
            <person name="Pearson M."/>
            <person name="Howarth C."/>
            <person name="Larson L."/>
            <person name="Luoma S."/>
            <person name="White J."/>
            <person name="Alvarado L."/>
            <person name="Kodira C.D."/>
            <person name="Zeng Q."/>
            <person name="Oleary S."/>
            <person name="Yandava C."/>
            <person name="Denning D.W."/>
            <person name="Nierman W.C."/>
            <person name="Milne T."/>
            <person name="Madden K."/>
        </authorList>
    </citation>
    <scope>NUCLEOTIDE SEQUENCE [LARGE SCALE GENOMIC DNA]</scope>
    <source>
        <strain>NIH 2624 / FGSC A1156</strain>
    </source>
</reference>
<name>PELF1_ASPTN</name>
<evidence type="ECO:0000250" key="1"/>
<evidence type="ECO:0000255" key="2"/>
<evidence type="ECO:0000305" key="3"/>
<accession>Q0CFF7</accession>
<dbReference type="EC" id="4.2.2.10"/>
<dbReference type="EMBL" id="CH476604">
    <property type="protein sequence ID" value="EAU31839.1"/>
    <property type="molecule type" value="Genomic_DNA"/>
</dbReference>
<dbReference type="RefSeq" id="XP_001216198.1">
    <property type="nucleotide sequence ID" value="XM_001216198.1"/>
</dbReference>
<dbReference type="SMR" id="Q0CFF7"/>
<dbReference type="STRING" id="341663.Q0CFF7"/>
<dbReference type="GlyCosmos" id="Q0CFF7">
    <property type="glycosylation" value="1 site, No reported glycans"/>
</dbReference>
<dbReference type="EnsemblFungi" id="EAU31839">
    <property type="protein sequence ID" value="EAU31839"/>
    <property type="gene ID" value="ATEG_07577"/>
</dbReference>
<dbReference type="GeneID" id="4323045"/>
<dbReference type="VEuPathDB" id="FungiDB:ATEG_07577"/>
<dbReference type="eggNOG" id="ENOG502RZWS">
    <property type="taxonomic scope" value="Eukaryota"/>
</dbReference>
<dbReference type="HOGENOM" id="CLU_021980_0_1_1"/>
<dbReference type="OMA" id="WSAGCNG"/>
<dbReference type="OrthoDB" id="2019149at2759"/>
<dbReference type="Proteomes" id="UP000007963">
    <property type="component" value="Unassembled WGS sequence"/>
</dbReference>
<dbReference type="GO" id="GO:0005576">
    <property type="term" value="C:extracellular region"/>
    <property type="evidence" value="ECO:0007669"/>
    <property type="project" value="UniProtKB-SubCell"/>
</dbReference>
<dbReference type="GO" id="GO:0030570">
    <property type="term" value="F:pectate lyase activity"/>
    <property type="evidence" value="ECO:0007669"/>
    <property type="project" value="InterPro"/>
</dbReference>
<dbReference type="GO" id="GO:0047490">
    <property type="term" value="F:pectin lyase activity"/>
    <property type="evidence" value="ECO:0000250"/>
    <property type="project" value="UniProtKB"/>
</dbReference>
<dbReference type="GO" id="GO:0071555">
    <property type="term" value="P:cell wall organization"/>
    <property type="evidence" value="ECO:0007669"/>
    <property type="project" value="UniProtKB-KW"/>
</dbReference>
<dbReference type="GO" id="GO:0045490">
    <property type="term" value="P:pectin catabolic process"/>
    <property type="evidence" value="ECO:0000250"/>
    <property type="project" value="UniProtKB"/>
</dbReference>
<dbReference type="FunFam" id="2.160.20.10:FF:000003">
    <property type="entry name" value="Pectin lyase F"/>
    <property type="match status" value="1"/>
</dbReference>
<dbReference type="Gene3D" id="2.160.20.10">
    <property type="entry name" value="Single-stranded right-handed beta-helix, Pectin lyase-like"/>
    <property type="match status" value="1"/>
</dbReference>
<dbReference type="InterPro" id="IPR002022">
    <property type="entry name" value="Pec_lyase"/>
</dbReference>
<dbReference type="InterPro" id="IPR012334">
    <property type="entry name" value="Pectin_lyas_fold"/>
</dbReference>
<dbReference type="InterPro" id="IPR011050">
    <property type="entry name" value="Pectin_lyase_fold/virulence"/>
</dbReference>
<dbReference type="InterPro" id="IPR045032">
    <property type="entry name" value="PEL"/>
</dbReference>
<dbReference type="PANTHER" id="PTHR31683">
    <property type="entry name" value="PECTATE LYASE 18-RELATED"/>
    <property type="match status" value="1"/>
</dbReference>
<dbReference type="PANTHER" id="PTHR31683:SF67">
    <property type="entry name" value="PECTIN LYASE F-RELATED"/>
    <property type="match status" value="1"/>
</dbReference>
<dbReference type="Pfam" id="PF00544">
    <property type="entry name" value="Pectate_lyase_4"/>
    <property type="match status" value="1"/>
</dbReference>
<dbReference type="SMART" id="SM00656">
    <property type="entry name" value="Amb_all"/>
    <property type="match status" value="1"/>
</dbReference>
<dbReference type="SUPFAM" id="SSF51126">
    <property type="entry name" value="Pectin lyase-like"/>
    <property type="match status" value="1"/>
</dbReference>
<organism>
    <name type="scientific">Aspergillus terreus (strain NIH 2624 / FGSC A1156)</name>
    <dbReference type="NCBI Taxonomy" id="341663"/>
    <lineage>
        <taxon>Eukaryota</taxon>
        <taxon>Fungi</taxon>
        <taxon>Dikarya</taxon>
        <taxon>Ascomycota</taxon>
        <taxon>Pezizomycotina</taxon>
        <taxon>Eurotiomycetes</taxon>
        <taxon>Eurotiomycetidae</taxon>
        <taxon>Eurotiales</taxon>
        <taxon>Aspergillaceae</taxon>
        <taxon>Aspergillus</taxon>
        <taxon>Aspergillus subgen. Circumdati</taxon>
    </lineage>
</organism>
<comment type="function">
    <text evidence="1">Pectinolytic enzymes consist of four classes of enzymes: pectin lyase, polygalacturonase, pectin methylesterase and rhamnogalacturonase. Among pectinolytic enzymes, pectin lyase is the most important in depolymerization of pectin, since it cleaves internal glycosidic bonds of highly methylated pectins (By similarity).</text>
</comment>
<comment type="catalytic activity">
    <reaction>
        <text>Eliminative cleavage of (1-&gt;4)-alpha-D-galacturonan methyl ester to give oligosaccharides with 4-deoxy-6-O-methyl-alpha-D-galact-4-enuronosyl groups at their non-reducing ends.</text>
        <dbReference type="EC" id="4.2.2.10"/>
    </reaction>
</comment>
<comment type="subcellular location">
    <subcellularLocation>
        <location evidence="1">Secreted</location>
    </subcellularLocation>
</comment>
<comment type="similarity">
    <text evidence="3">Belongs to the polysaccharide lyase 1 family.</text>
</comment>
<feature type="signal peptide" evidence="2">
    <location>
        <begin position="1"/>
        <end position="19"/>
    </location>
</feature>
<feature type="chain" id="PRO_0000394360" description="Probable pectin lyase F-1">
    <location>
        <begin position="20"/>
        <end position="388"/>
    </location>
</feature>
<feature type="active site" evidence="2">
    <location>
        <position position="253"/>
    </location>
</feature>
<feature type="glycosylation site" description="N-linked (GlcNAc...) asparagine" evidence="2">
    <location>
        <position position="126"/>
    </location>
</feature>
<feature type="disulfide bond" evidence="1">
    <location>
        <begin position="80"/>
        <end position="103"/>
    </location>
</feature>
<feature type="disulfide bond" evidence="1">
    <location>
        <begin position="328"/>
        <end position="336"/>
    </location>
</feature>
<keyword id="KW-0119">Carbohydrate metabolism</keyword>
<keyword id="KW-0961">Cell wall biogenesis/degradation</keyword>
<keyword id="KW-1015">Disulfide bond</keyword>
<keyword id="KW-0325">Glycoprotein</keyword>
<keyword id="KW-0456">Lyase</keyword>
<keyword id="KW-0624">Polysaccharide degradation</keyword>
<keyword id="KW-1185">Reference proteome</keyword>
<keyword id="KW-0964">Secreted</keyword>
<keyword id="KW-0732">Signal</keyword>